<proteinExistence type="evidence at protein level"/>
<comment type="function">
    <text evidence="6 7">May play a role in sperm development or sperm function (PubMed:17904097). However, does not appear to have an essential role in spermatogenesis or male fertility (PubMed:21439084).</text>
</comment>
<comment type="interaction">
    <interactant intactId="EBI-2860313">
        <id>Q3KNS1</id>
    </interactant>
    <interactant intactId="EBI-10961624">
        <id>Q2TAC2-2</id>
        <label>CCDC57</label>
    </interactant>
    <organismsDiffer>false</organismsDiffer>
    <experiments>3</experiments>
</comment>
<comment type="subcellular location">
    <subcellularLocation>
        <location evidence="6">Cell projection</location>
        <location evidence="6">Cilium</location>
        <location evidence="6">Flagellum membrane</location>
        <topology evidence="1">Multi-pass membrane protein</topology>
    </subcellularLocation>
    <subcellularLocation>
        <location evidence="7">Endoplasmic reticulum membrane</location>
        <topology evidence="1">Multi-pass membrane protein</topology>
    </subcellularLocation>
    <text evidence="6">Localizes to the midpiece of the sperm tail.</text>
</comment>
<comment type="alternative products">
    <event type="alternative splicing"/>
    <isoform>
        <id>Q3KNS1-1</id>
        <name>1</name>
        <sequence type="displayed"/>
    </isoform>
    <isoform>
        <id>Q3KNS1-2</id>
        <name>2</name>
        <sequence type="described" ref="VSP_061519 VSP_061520"/>
    </isoform>
</comment>
<comment type="tissue specificity">
    <text evidence="6 7">Expressed in germ cells of the testis (at protein level) (PubMed:17904097). Detected in blood lymph, colon, small intestine, ovary, testis, prostate, thymus and spleen with highest levels in testis (PubMed:21439084).</text>
</comment>
<comment type="polymorphism">
    <text evidence="8">A stop codon in the gene coding for this protein at position Glu-768 is responsible for functional diversity thus producing a pseudogene.</text>
</comment>
<comment type="polymorphism">
    <text evidence="7">The copy number of PTCHD3 varies between individuals with some individuals having no copy of the gene due to a 102,624 base pair deletion spanning the PTCHD3 gene. This deletion does not appear to be associated with an overt phenotype and is found in 0.6-1.6% of individuals of European ancestry.</text>
</comment>
<comment type="similarity">
    <text evidence="8">Belongs to the patched family.</text>
</comment>
<dbReference type="EMBL" id="JF332167">
    <property type="protein sequence ID" value="AEA72435.1"/>
    <property type="molecule type" value="mRNA"/>
</dbReference>
<dbReference type="EMBL" id="AL355493">
    <property type="status" value="NOT_ANNOTATED_CDS"/>
    <property type="molecule type" value="Genomic_DNA"/>
</dbReference>
<dbReference type="EMBL" id="AK126025">
    <property type="protein sequence ID" value="BAC86399.1"/>
    <property type="molecule type" value="mRNA"/>
</dbReference>
<dbReference type="EMBL" id="BC107139">
    <property type="protein sequence ID" value="AAI07140.1"/>
    <property type="molecule type" value="mRNA"/>
</dbReference>
<dbReference type="RefSeq" id="NP_001030014.2">
    <property type="nucleotide sequence ID" value="NM_001034842.3"/>
</dbReference>
<dbReference type="RefSeq" id="NP_001382672.1">
    <molecule id="Q3KNS1-1"/>
    <property type="nucleotide sequence ID" value="NM_001395743.1"/>
</dbReference>
<dbReference type="SMR" id="Q3KNS1"/>
<dbReference type="BioGRID" id="131890">
    <property type="interactions" value="30"/>
</dbReference>
<dbReference type="IntAct" id="Q3KNS1">
    <property type="interactions" value="29"/>
</dbReference>
<dbReference type="GlyCosmos" id="Q3KNS1">
    <property type="glycosylation" value="6 sites, No reported glycans"/>
</dbReference>
<dbReference type="GlyGen" id="Q3KNS1">
    <property type="glycosylation" value="7 sites, 1 O-linked glycan (1 site)"/>
</dbReference>
<dbReference type="iPTMnet" id="Q3KNS1"/>
<dbReference type="PhosphoSitePlus" id="Q3KNS1"/>
<dbReference type="BioMuta" id="PTCHD3"/>
<dbReference type="DMDM" id="425906063"/>
<dbReference type="MassIVE" id="Q3KNS1"/>
<dbReference type="PaxDb" id="9606-ENSP00000417658"/>
<dbReference type="PeptideAtlas" id="Q3KNS1"/>
<dbReference type="DNASU" id="374308"/>
<dbReference type="GeneID" id="374308"/>
<dbReference type="KEGG" id="hsa:374308"/>
<dbReference type="UCSC" id="uc001itu.3">
    <molecule id="Q3KNS1-1"/>
    <property type="organism name" value="human"/>
</dbReference>
<dbReference type="AGR" id="HGNC:24776"/>
<dbReference type="CTD" id="374308"/>
<dbReference type="DisGeNET" id="374308"/>
<dbReference type="GeneCards" id="PTCHD3"/>
<dbReference type="HGNC" id="HGNC:24776">
    <property type="gene designation" value="PTCHD3"/>
</dbReference>
<dbReference type="MIM" id="611791">
    <property type="type" value="gene"/>
</dbReference>
<dbReference type="neXtProt" id="NX_Q3KNS1"/>
<dbReference type="PharmGKB" id="PA142671117"/>
<dbReference type="eggNOG" id="KOG1934">
    <property type="taxonomic scope" value="Eukaryota"/>
</dbReference>
<dbReference type="HOGENOM" id="CLU_002359_2_2_1"/>
<dbReference type="InParanoid" id="Q3KNS1"/>
<dbReference type="OrthoDB" id="9539914at2759"/>
<dbReference type="PAN-GO" id="Q3KNS1">
    <property type="GO annotations" value="1 GO annotation based on evolutionary models"/>
</dbReference>
<dbReference type="PhylomeDB" id="Q3KNS1"/>
<dbReference type="TreeFam" id="TF331806"/>
<dbReference type="PathwayCommons" id="Q3KNS1"/>
<dbReference type="SignaLink" id="Q3KNS1"/>
<dbReference type="BioGRID-ORCS" id="374308">
    <property type="hits" value="12 hits in 1141 CRISPR screens"/>
</dbReference>
<dbReference type="ChiTaRS" id="PTCHD3">
    <property type="organism name" value="human"/>
</dbReference>
<dbReference type="GenomeRNAi" id="374308"/>
<dbReference type="Pharos" id="Q3KNS1">
    <property type="development level" value="Tbio"/>
</dbReference>
<dbReference type="PRO" id="PR:Q3KNS1"/>
<dbReference type="Proteomes" id="UP000005640">
    <property type="component" value="Chromosome 10"/>
</dbReference>
<dbReference type="RNAct" id="Q3KNS1">
    <property type="molecule type" value="protein"/>
</dbReference>
<dbReference type="GO" id="GO:0005783">
    <property type="term" value="C:endoplasmic reticulum"/>
    <property type="evidence" value="ECO:0000314"/>
    <property type="project" value="UniProtKB"/>
</dbReference>
<dbReference type="GO" id="GO:0005789">
    <property type="term" value="C:endoplasmic reticulum membrane"/>
    <property type="evidence" value="ECO:0007669"/>
    <property type="project" value="UniProtKB-SubCell"/>
</dbReference>
<dbReference type="GO" id="GO:0016020">
    <property type="term" value="C:membrane"/>
    <property type="evidence" value="ECO:0000318"/>
    <property type="project" value="GO_Central"/>
</dbReference>
<dbReference type="GO" id="GO:0005886">
    <property type="term" value="C:plasma membrane"/>
    <property type="evidence" value="ECO:0007669"/>
    <property type="project" value="UniProtKB-KW"/>
</dbReference>
<dbReference type="GO" id="GO:0097225">
    <property type="term" value="C:sperm midpiece"/>
    <property type="evidence" value="ECO:0000314"/>
    <property type="project" value="UniProtKB"/>
</dbReference>
<dbReference type="FunFam" id="1.20.1640.10:FF:000013">
    <property type="entry name" value="PaTched Related family"/>
    <property type="match status" value="1"/>
</dbReference>
<dbReference type="Gene3D" id="1.20.1640.10">
    <property type="entry name" value="Multidrug efflux transporter AcrB transmembrane domain"/>
    <property type="match status" value="2"/>
</dbReference>
<dbReference type="InterPro" id="IPR051697">
    <property type="entry name" value="Patched_domain-protein"/>
</dbReference>
<dbReference type="InterPro" id="IPR003392">
    <property type="entry name" value="PTHD_SSD"/>
</dbReference>
<dbReference type="InterPro" id="IPR000731">
    <property type="entry name" value="SSD"/>
</dbReference>
<dbReference type="PANTHER" id="PTHR10796:SF60">
    <property type="entry name" value="PATCHED DOMAIN-CONTAINING PROTEIN 3"/>
    <property type="match status" value="1"/>
</dbReference>
<dbReference type="PANTHER" id="PTHR10796">
    <property type="entry name" value="PATCHED-RELATED"/>
    <property type="match status" value="1"/>
</dbReference>
<dbReference type="Pfam" id="PF02460">
    <property type="entry name" value="Patched"/>
    <property type="match status" value="1"/>
</dbReference>
<dbReference type="SUPFAM" id="SSF82866">
    <property type="entry name" value="Multidrug efflux transporter AcrB transmembrane domain"/>
    <property type="match status" value="2"/>
</dbReference>
<dbReference type="PROSITE" id="PS50156">
    <property type="entry name" value="SSD"/>
    <property type="match status" value="1"/>
</dbReference>
<accession>Q3KNS1</accession>
<accession>F6LPT1</accession>
<accession>I3L499</accession>
<accession>Q6ZU28</accession>
<evidence type="ECO:0000255" key="1"/>
<evidence type="ECO:0000255" key="2">
    <source>
        <dbReference type="PROSITE-ProRule" id="PRU00199"/>
    </source>
</evidence>
<evidence type="ECO:0000256" key="3">
    <source>
        <dbReference type="SAM" id="MobiDB-lite"/>
    </source>
</evidence>
<evidence type="ECO:0000269" key="4">
    <source>
    </source>
</evidence>
<evidence type="ECO:0000269" key="5">
    <source>
    </source>
</evidence>
<evidence type="ECO:0000269" key="6">
    <source>
    </source>
</evidence>
<evidence type="ECO:0000269" key="7">
    <source>
    </source>
</evidence>
<evidence type="ECO:0000305" key="8"/>
<evidence type="ECO:0000312" key="9">
    <source>
        <dbReference type="EMBL" id="AEA72435.1"/>
    </source>
</evidence>
<sequence>MPWVEPKPRPGPEQKPKLTKPDSATGPQWYQESQESESEGKQPPPGPLAPPKSPEPSGPLASEQDAPLPEGDDAPPRPSMLDDAPRLPLELDDAPLPEEETPEPTAICRHRHRCHTDCLEGLLSRTFQWLGWQVGAHPWIFLLAPLMLTAALGTGFLYLPKDEEEDLEEHYTPVGSPAKAERRFVQGHFTTNDSYRFSASRRSTEANFVSLLVVSYSDSLLDPATFAEVSKLDGAVQDLRVAREKGSQIQYQQVCARYRALCVPPNPILYAWQVNKTLNLSSISFPAYNHGRHPLYLTGFFGGYILGGSLGMGQLLLRAKAMRLLYYLKTEDPEYDVQSKQWLTHLLDQFTNIKNILALKKIEVVHFTSLSRQLEFEATSVTVIPVFHLAYILIILFAVTSCFRFDCIRNKMCVAAFGVISAFLAVVSGFGLLLHIGVPFVIIVANSPFLILGVGVDDMFIMISAWHKTNLADDIRERMSNVYSKAAVSITITTITNILALYTGIMSSFRSVQCFCIYTGMTLLFCYFYNITCFGAFMALDGKREVVCLCWLKKADPKWPSFKKFCCFPFGSVPDEHGTDIHPISLFFRDYFGPFLTRSESKYFVVFIYVLYIISSIYGCFHVQEGLDLRNLASDDSYITPYFNVEENYFSDYGPRVMVIVTKKVDYWDKDVRQKLENCTKIFEKNVYVDKNLTEFWLDAYVQYLKGNSQDPNEKNTFMNNIPDFLSNFPNFQHDINISSSNEIISSRGFIQTTDVSSSAKKKILLFQLRRIAEDCQIPLMVYNQAFIYFDQYAAILEDTVRNVLVASAAMFIVSLLLIPYPLCSLWVTFAIGSVIVGVTGFMAFWKVNLDSISMINLVICIGFSFDFSVHISYAFVSSSQPSVNQKSVEALYLLGYPVLQSAISTIIGVCVLAAAKAYIFRTFFKIMFLVMIFGAAHGLIFIPVFLTFFGRFI</sequence>
<keyword id="KW-0025">Alternative splicing</keyword>
<keyword id="KW-1003">Cell membrane</keyword>
<keyword id="KW-0966">Cell projection</keyword>
<keyword id="KW-0969">Cilium</keyword>
<keyword id="KW-0256">Endoplasmic reticulum</keyword>
<keyword id="KW-0282">Flagellum</keyword>
<keyword id="KW-0325">Glycoprotein</keyword>
<keyword id="KW-0472">Membrane</keyword>
<keyword id="KW-1185">Reference proteome</keyword>
<keyword id="KW-0812">Transmembrane</keyword>
<keyword id="KW-1133">Transmembrane helix</keyword>
<name>PTHD3_HUMAN</name>
<protein>
    <recommendedName>
        <fullName>Patched domain-containing protein 3</fullName>
    </recommendedName>
    <alternativeName>
        <fullName>Patched-related protein</fullName>
    </alternativeName>
</protein>
<gene>
    <name type="primary">PTCHD3</name>
    <name type="synonym">PTR</name>
</gene>
<organism>
    <name type="scientific">Homo sapiens</name>
    <name type="common">Human</name>
    <dbReference type="NCBI Taxonomy" id="9606"/>
    <lineage>
        <taxon>Eukaryota</taxon>
        <taxon>Metazoa</taxon>
        <taxon>Chordata</taxon>
        <taxon>Craniata</taxon>
        <taxon>Vertebrata</taxon>
        <taxon>Euteleostomi</taxon>
        <taxon>Mammalia</taxon>
        <taxon>Eutheria</taxon>
        <taxon>Euarchontoglires</taxon>
        <taxon>Primates</taxon>
        <taxon>Haplorrhini</taxon>
        <taxon>Catarrhini</taxon>
        <taxon>Hominidae</taxon>
        <taxon>Homo</taxon>
    </lineage>
</organism>
<reference evidence="9" key="1">
    <citation type="journal article" date="2011" name="BMC Med. Genet.">
        <title>Human PTCHD3 nulls: rare copy number and sequence variants suggest a non-essential gene.</title>
        <authorList>
            <person name="Ghahramani Seno M.M."/>
            <person name="Kwan B.Y."/>
            <person name="Lee-Ng K.K."/>
            <person name="Moessner R."/>
            <person name="Lionel A.C."/>
            <person name="Marshall C.R."/>
            <person name="Scherer S.W."/>
        </authorList>
    </citation>
    <scope>NUCLEOTIDE SEQUENCE [MRNA] (ISOFORM 2)</scope>
    <scope>FUNCTION</scope>
    <scope>SUBCELLULAR LOCATION</scope>
    <scope>TISSUE SPECIFICITY</scope>
    <scope>POLYMORPHISM</scope>
    <scope>VARIANT GLY-473</scope>
    <source>
        <tissue evidence="9">Lymph node</tissue>
    </source>
</reference>
<reference key="2">
    <citation type="journal article" date="2004" name="Nature">
        <title>The DNA sequence and comparative analysis of human chromosome 10.</title>
        <authorList>
            <person name="Deloukas P."/>
            <person name="Earthrowl M.E."/>
            <person name="Grafham D.V."/>
            <person name="Rubenfield M."/>
            <person name="French L."/>
            <person name="Steward C.A."/>
            <person name="Sims S.K."/>
            <person name="Jones M.C."/>
            <person name="Searle S."/>
            <person name="Scott C."/>
            <person name="Howe K."/>
            <person name="Hunt S.E."/>
            <person name="Andrews T.D."/>
            <person name="Gilbert J.G.R."/>
            <person name="Swarbreck D."/>
            <person name="Ashurst J.L."/>
            <person name="Taylor A."/>
            <person name="Battles J."/>
            <person name="Bird C.P."/>
            <person name="Ainscough R."/>
            <person name="Almeida J.P."/>
            <person name="Ashwell R.I.S."/>
            <person name="Ambrose K.D."/>
            <person name="Babbage A.K."/>
            <person name="Bagguley C.L."/>
            <person name="Bailey J."/>
            <person name="Banerjee R."/>
            <person name="Bates K."/>
            <person name="Beasley H."/>
            <person name="Bray-Allen S."/>
            <person name="Brown A.J."/>
            <person name="Brown J.Y."/>
            <person name="Burford D.C."/>
            <person name="Burrill W."/>
            <person name="Burton J."/>
            <person name="Cahill P."/>
            <person name="Camire D."/>
            <person name="Carter N.P."/>
            <person name="Chapman J.C."/>
            <person name="Clark S.Y."/>
            <person name="Clarke G."/>
            <person name="Clee C.M."/>
            <person name="Clegg S."/>
            <person name="Corby N."/>
            <person name="Coulson A."/>
            <person name="Dhami P."/>
            <person name="Dutta I."/>
            <person name="Dunn M."/>
            <person name="Faulkner L."/>
            <person name="Frankish A."/>
            <person name="Frankland J.A."/>
            <person name="Garner P."/>
            <person name="Garnett J."/>
            <person name="Gribble S."/>
            <person name="Griffiths C."/>
            <person name="Grocock R."/>
            <person name="Gustafson E."/>
            <person name="Hammond S."/>
            <person name="Harley J.L."/>
            <person name="Hart E."/>
            <person name="Heath P.D."/>
            <person name="Ho T.P."/>
            <person name="Hopkins B."/>
            <person name="Horne J."/>
            <person name="Howden P.J."/>
            <person name="Huckle E."/>
            <person name="Hynds C."/>
            <person name="Johnson C."/>
            <person name="Johnson D."/>
            <person name="Kana A."/>
            <person name="Kay M."/>
            <person name="Kimberley A.M."/>
            <person name="Kershaw J.K."/>
            <person name="Kokkinaki M."/>
            <person name="Laird G.K."/>
            <person name="Lawlor S."/>
            <person name="Lee H.M."/>
            <person name="Leongamornlert D.A."/>
            <person name="Laird G."/>
            <person name="Lloyd C."/>
            <person name="Lloyd D.M."/>
            <person name="Loveland J."/>
            <person name="Lovell J."/>
            <person name="McLaren S."/>
            <person name="McLay K.E."/>
            <person name="McMurray A."/>
            <person name="Mashreghi-Mohammadi M."/>
            <person name="Matthews L."/>
            <person name="Milne S."/>
            <person name="Nickerson T."/>
            <person name="Nguyen M."/>
            <person name="Overton-Larty E."/>
            <person name="Palmer S.A."/>
            <person name="Pearce A.V."/>
            <person name="Peck A.I."/>
            <person name="Pelan S."/>
            <person name="Phillimore B."/>
            <person name="Porter K."/>
            <person name="Rice C.M."/>
            <person name="Rogosin A."/>
            <person name="Ross M.T."/>
            <person name="Sarafidou T."/>
            <person name="Sehra H.K."/>
            <person name="Shownkeen R."/>
            <person name="Skuce C.D."/>
            <person name="Smith M."/>
            <person name="Standring L."/>
            <person name="Sycamore N."/>
            <person name="Tester J."/>
            <person name="Thorpe A."/>
            <person name="Torcasso W."/>
            <person name="Tracey A."/>
            <person name="Tromans A."/>
            <person name="Tsolas J."/>
            <person name="Wall M."/>
            <person name="Walsh J."/>
            <person name="Wang H."/>
            <person name="Weinstock K."/>
            <person name="West A.P."/>
            <person name="Willey D.L."/>
            <person name="Whitehead S.L."/>
            <person name="Wilming L."/>
            <person name="Wray P.W."/>
            <person name="Young L."/>
            <person name="Chen Y."/>
            <person name="Lovering R.C."/>
            <person name="Moschonas N.K."/>
            <person name="Siebert R."/>
            <person name="Fechtel K."/>
            <person name="Bentley D."/>
            <person name="Durbin R.M."/>
            <person name="Hubbard T."/>
            <person name="Doucette-Stamm L."/>
            <person name="Beck S."/>
            <person name="Smith D.R."/>
            <person name="Rogers J."/>
        </authorList>
    </citation>
    <scope>NUCLEOTIDE SEQUENCE [LARGE SCALE GENOMIC DNA]</scope>
</reference>
<reference key="3">
    <citation type="journal article" date="2004" name="Nat. Genet.">
        <title>Complete sequencing and characterization of 21,243 full-length human cDNAs.</title>
        <authorList>
            <person name="Ota T."/>
            <person name="Suzuki Y."/>
            <person name="Nishikawa T."/>
            <person name="Otsuki T."/>
            <person name="Sugiyama T."/>
            <person name="Irie R."/>
            <person name="Wakamatsu A."/>
            <person name="Hayashi K."/>
            <person name="Sato H."/>
            <person name="Nagai K."/>
            <person name="Kimura K."/>
            <person name="Makita H."/>
            <person name="Sekine M."/>
            <person name="Obayashi M."/>
            <person name="Nishi T."/>
            <person name="Shibahara T."/>
            <person name="Tanaka T."/>
            <person name="Ishii S."/>
            <person name="Yamamoto J."/>
            <person name="Saito K."/>
            <person name="Kawai Y."/>
            <person name="Isono Y."/>
            <person name="Nakamura Y."/>
            <person name="Nagahari K."/>
            <person name="Murakami K."/>
            <person name="Yasuda T."/>
            <person name="Iwayanagi T."/>
            <person name="Wagatsuma M."/>
            <person name="Shiratori A."/>
            <person name="Sudo H."/>
            <person name="Hosoiri T."/>
            <person name="Kaku Y."/>
            <person name="Kodaira H."/>
            <person name="Kondo H."/>
            <person name="Sugawara M."/>
            <person name="Takahashi M."/>
            <person name="Kanda K."/>
            <person name="Yokoi T."/>
            <person name="Furuya T."/>
            <person name="Kikkawa E."/>
            <person name="Omura Y."/>
            <person name="Abe K."/>
            <person name="Kamihara K."/>
            <person name="Katsuta N."/>
            <person name="Sato K."/>
            <person name="Tanikawa M."/>
            <person name="Yamazaki M."/>
            <person name="Ninomiya K."/>
            <person name="Ishibashi T."/>
            <person name="Yamashita H."/>
            <person name="Murakawa K."/>
            <person name="Fujimori K."/>
            <person name="Tanai H."/>
            <person name="Kimata M."/>
            <person name="Watanabe M."/>
            <person name="Hiraoka S."/>
            <person name="Chiba Y."/>
            <person name="Ishida S."/>
            <person name="Ono Y."/>
            <person name="Takiguchi S."/>
            <person name="Watanabe S."/>
            <person name="Yosida M."/>
            <person name="Hotuta T."/>
            <person name="Kusano J."/>
            <person name="Kanehori K."/>
            <person name="Takahashi-Fujii A."/>
            <person name="Hara H."/>
            <person name="Tanase T.-O."/>
            <person name="Nomura Y."/>
            <person name="Togiya S."/>
            <person name="Komai F."/>
            <person name="Hara R."/>
            <person name="Takeuchi K."/>
            <person name="Arita M."/>
            <person name="Imose N."/>
            <person name="Musashino K."/>
            <person name="Yuuki H."/>
            <person name="Oshima A."/>
            <person name="Sasaki N."/>
            <person name="Aotsuka S."/>
            <person name="Yoshikawa Y."/>
            <person name="Matsunawa H."/>
            <person name="Ichihara T."/>
            <person name="Shiohata N."/>
            <person name="Sano S."/>
            <person name="Moriya S."/>
            <person name="Momiyama H."/>
            <person name="Satoh N."/>
            <person name="Takami S."/>
            <person name="Terashima Y."/>
            <person name="Suzuki O."/>
            <person name="Nakagawa S."/>
            <person name="Senoh A."/>
            <person name="Mizoguchi H."/>
            <person name="Goto Y."/>
            <person name="Shimizu F."/>
            <person name="Wakebe H."/>
            <person name="Hishigaki H."/>
            <person name="Watanabe T."/>
            <person name="Sugiyama A."/>
            <person name="Takemoto M."/>
            <person name="Kawakami B."/>
            <person name="Yamazaki M."/>
            <person name="Watanabe K."/>
            <person name="Kumagai A."/>
            <person name="Itakura S."/>
            <person name="Fukuzumi Y."/>
            <person name="Fujimori Y."/>
            <person name="Komiyama M."/>
            <person name="Tashiro H."/>
            <person name="Tanigami A."/>
            <person name="Fujiwara T."/>
            <person name="Ono T."/>
            <person name="Yamada K."/>
            <person name="Fujii Y."/>
            <person name="Ozaki K."/>
            <person name="Hirao M."/>
            <person name="Ohmori Y."/>
            <person name="Kawabata A."/>
            <person name="Hikiji T."/>
            <person name="Kobatake N."/>
            <person name="Inagaki H."/>
            <person name="Ikema Y."/>
            <person name="Okamoto S."/>
            <person name="Okitani R."/>
            <person name="Kawakami T."/>
            <person name="Noguchi S."/>
            <person name="Itoh T."/>
            <person name="Shigeta K."/>
            <person name="Senba T."/>
            <person name="Matsumura K."/>
            <person name="Nakajima Y."/>
            <person name="Mizuno T."/>
            <person name="Morinaga M."/>
            <person name="Sasaki M."/>
            <person name="Togashi T."/>
            <person name="Oyama M."/>
            <person name="Hata H."/>
            <person name="Watanabe M."/>
            <person name="Komatsu T."/>
            <person name="Mizushima-Sugano J."/>
            <person name="Satoh T."/>
            <person name="Shirai Y."/>
            <person name="Takahashi Y."/>
            <person name="Nakagawa K."/>
            <person name="Okumura K."/>
            <person name="Nagase T."/>
            <person name="Nomura N."/>
            <person name="Kikuchi H."/>
            <person name="Masuho Y."/>
            <person name="Yamashita R."/>
            <person name="Nakai K."/>
            <person name="Yada T."/>
            <person name="Nakamura Y."/>
            <person name="Ohara O."/>
            <person name="Isogai T."/>
            <person name="Sugano S."/>
        </authorList>
    </citation>
    <scope>NUCLEOTIDE SEQUENCE [LARGE SCALE MRNA] OF 1-804</scope>
    <scope>VARIANTS GLY-473; THR-521 AND MET-584</scope>
    <source>
        <tissue>Testis</tissue>
    </source>
</reference>
<reference key="4">
    <citation type="journal article" date="2004" name="Genome Res.">
        <title>The status, quality, and expansion of the NIH full-length cDNA project: the Mammalian Gene Collection (MGC).</title>
        <authorList>
            <consortium name="The MGC Project Team"/>
        </authorList>
    </citation>
    <scope>NUCLEOTIDE SEQUENCE [LARGE SCALE MRNA] OF 1-767</scope>
    <scope>VARIANTS PRO-152 AND MET-584</scope>
</reference>
<reference key="5">
    <citation type="journal article" date="2007" name="Biochem. Biophys. Res. Commun.">
        <title>Male germ cell-specific expression of a novel patched-domain containing gene Ptchd3.</title>
        <authorList>
            <person name="Fan J."/>
            <person name="Akabane H."/>
            <person name="Zheng X."/>
            <person name="Zhou X."/>
            <person name="Zhang L."/>
            <person name="Liu Q."/>
            <person name="Zhang Y.-L."/>
            <person name="Yang J."/>
            <person name="Zhu G.-Z."/>
        </authorList>
    </citation>
    <scope>FUNCTION</scope>
    <scope>SUBCELLULAR LOCATION</scope>
    <scope>TISSUE SPECIFICITY</scope>
</reference>
<feature type="chain" id="PRO_0000309262" description="Patched domain-containing protein 3">
    <location>
        <begin position="1"/>
        <end position="954"/>
    </location>
</feature>
<feature type="transmembrane region" description="Helical" evidence="1">
    <location>
        <begin position="139"/>
        <end position="159"/>
    </location>
</feature>
<feature type="transmembrane region" description="Helical" evidence="1">
    <location>
        <begin position="297"/>
        <end position="317"/>
    </location>
</feature>
<feature type="transmembrane region" description="Helical" evidence="1">
    <location>
        <begin position="383"/>
        <end position="403"/>
    </location>
</feature>
<feature type="transmembrane region" description="Helical" evidence="1">
    <location>
        <begin position="423"/>
        <end position="443"/>
    </location>
</feature>
<feature type="transmembrane region" description="Helical" evidence="1">
    <location>
        <begin position="447"/>
        <end position="467"/>
    </location>
</feature>
<feature type="transmembrane region" description="Helical" evidence="1">
    <location>
        <begin position="486"/>
        <end position="506"/>
    </location>
</feature>
<feature type="transmembrane region" description="Helical" evidence="1">
    <location>
        <begin position="520"/>
        <end position="540"/>
    </location>
</feature>
<feature type="transmembrane region" description="Helical" evidence="1">
    <location>
        <begin position="603"/>
        <end position="623"/>
    </location>
</feature>
<feature type="transmembrane region" description="Helical" evidence="1">
    <location>
        <begin position="804"/>
        <end position="824"/>
    </location>
</feature>
<feature type="transmembrane region" description="Helical" evidence="1">
    <location>
        <begin position="826"/>
        <end position="846"/>
    </location>
</feature>
<feature type="transmembrane region" description="Helical" evidence="1">
    <location>
        <begin position="858"/>
        <end position="878"/>
    </location>
</feature>
<feature type="transmembrane region" description="Helical" evidence="1">
    <location>
        <begin position="894"/>
        <end position="914"/>
    </location>
</feature>
<feature type="transmembrane region" description="Helical" evidence="1">
    <location>
        <begin position="927"/>
        <end position="947"/>
    </location>
</feature>
<feature type="domain" description="SSD" evidence="2">
    <location>
        <begin position="383"/>
        <end position="540"/>
    </location>
</feature>
<feature type="region of interest" description="Disordered" evidence="3">
    <location>
        <begin position="1"/>
        <end position="103"/>
    </location>
</feature>
<feature type="compositionally biased region" description="Basic and acidic residues" evidence="3">
    <location>
        <begin position="1"/>
        <end position="20"/>
    </location>
</feature>
<feature type="compositionally biased region" description="Pro residues" evidence="3">
    <location>
        <begin position="42"/>
        <end position="57"/>
    </location>
</feature>
<feature type="compositionally biased region" description="Acidic residues" evidence="3">
    <location>
        <begin position="90"/>
        <end position="102"/>
    </location>
</feature>
<feature type="glycosylation site" description="N-linked (GlcNAc...) asparagine" evidence="1">
    <location>
        <position position="192"/>
    </location>
</feature>
<feature type="glycosylation site" description="N-linked (GlcNAc...) asparagine" evidence="1">
    <location>
        <position position="275"/>
    </location>
</feature>
<feature type="glycosylation site" description="N-linked (GlcNAc...) asparagine" evidence="1">
    <location>
        <position position="279"/>
    </location>
</feature>
<feature type="glycosylation site" description="N-linked (GlcNAc...) asparagine" evidence="1">
    <location>
        <position position="678"/>
    </location>
</feature>
<feature type="glycosylation site" description="N-linked (GlcNAc...) asparagine" evidence="1">
    <location>
        <position position="692"/>
    </location>
</feature>
<feature type="glycosylation site" description="N-linked (GlcNAc...) asparagine" evidence="1">
    <location>
        <position position="737"/>
    </location>
</feature>
<feature type="splice variant" id="VSP_061519" description="In isoform 2.">
    <original>SVQCFCIYTGMTLLFCYFYNITC</original>
    <variation>ASFRQQMFLPQPKRKYCYSNYDA</variation>
    <location>
        <begin position="511"/>
        <end position="533"/>
    </location>
</feature>
<feature type="splice variant" id="VSP_061520" description="In isoform 2.">
    <location>
        <begin position="534"/>
        <end position="954"/>
    </location>
</feature>
<feature type="sequence variant" id="VAR_036918" description="In dbSNP:rs12098477.">
    <original>T</original>
    <variation>A</variation>
    <location>
        <position position="126"/>
    </location>
</feature>
<feature type="sequence variant" id="VAR_036919" description="In dbSNP:rs6482626." evidence="5">
    <original>L</original>
    <variation>P</variation>
    <location>
        <position position="152"/>
    </location>
</feature>
<feature type="sequence variant" id="VAR_036920" description="In dbSNP:rs12098562.">
    <original>A</original>
    <variation>G</variation>
    <location>
        <position position="224"/>
    </location>
</feature>
<feature type="sequence variant" id="VAR_036921" description="In dbSNP:rs2152099.">
    <original>R</original>
    <variation>K</variation>
    <location>
        <position position="372"/>
    </location>
</feature>
<feature type="sequence variant" id="VAR_036922" description="In dbSNP:rs2484180.">
    <original>C</original>
    <variation>G</variation>
    <location>
        <position position="407"/>
    </location>
</feature>
<feature type="sequence variant" id="VAR_036923" description="In dbSNP:rs2429485." evidence="4 7">
    <original>D</original>
    <variation>G</variation>
    <location>
        <position position="473"/>
    </location>
</feature>
<feature type="sequence variant" id="VAR_036924" description="In dbSNP:rs2505327." evidence="4">
    <original>M</original>
    <variation>T</variation>
    <location>
        <position position="521"/>
    </location>
</feature>
<feature type="sequence variant" id="VAR_036925" description="In dbSNP:rs1638630." evidence="4 5">
    <original>I</original>
    <variation>M</variation>
    <location>
        <position position="584"/>
    </location>
</feature>
<feature type="sequence conflict" description="In Ref. 3; BAC86399." evidence="8" ref="3">
    <original>R</original>
    <variation>G</variation>
    <location>
        <position position="404"/>
    </location>
</feature>